<keyword id="KW-0002">3D-structure</keyword>
<keyword id="KW-0204">Cytolysis</keyword>
<keyword id="KW-0903">Direct protein sequencing</keyword>
<keyword id="KW-1015">Disulfide bond</keyword>
<keyword id="KW-0446">Lipid-binding</keyword>
<keyword id="KW-0611">Plant defense</keyword>
<keyword id="KW-0926">Vacuole</keyword>
<reference evidence="4" key="1">
    <citation type="journal article" date="2016" name="Proc. Natl. Acad. Sci. U.S.A.">
        <title>Binding of phosphatidic acid by NsD7 mediates the formation of helical defensin-lipid oligomeric assemblies and membrane permeabilization.</title>
        <authorList>
            <person name="Kvansakul M."/>
            <person name="Lay F.T."/>
            <person name="Adda C.G."/>
            <person name="Veneer P.K."/>
            <person name="Baxter A.A."/>
            <person name="Phan T.K."/>
            <person name="Poon I.K."/>
            <person name="Hulett M.D."/>
        </authorList>
    </citation>
    <scope>PROTEIN SEQUENCE</scope>
    <scope>X-RAY CRYSTALLOGRAPHY (1.7 ANGSTROMS) OF 1-47 IN COMPLEX WITH PHOSPHATIDIC ACID</scope>
    <scope>FUNCTION</scope>
    <scope>SUBUNIT</scope>
    <scope>DISULFIDE BONDS</scope>
    <scope>MUTAGENESIS OF LYS-4; ILE-15; ARG-26; LYS-36; ILE-37 AND ARG-39</scope>
</reference>
<dbReference type="PDB" id="5KK4">
    <property type="method" value="X-ray"/>
    <property type="resolution" value="1.70 A"/>
    <property type="chains" value="A/B/C/D/E/F=1-47"/>
</dbReference>
<dbReference type="PDB" id="5VYP">
    <property type="method" value="X-ray"/>
    <property type="resolution" value="2.60 A"/>
    <property type="chains" value="A/B/C/D/E/F/G/H/I/J/K/L/M/N/O/P/Q/R/S/T/U/V/W/X=1-47"/>
</dbReference>
<dbReference type="PDBsum" id="5KK4"/>
<dbReference type="PDBsum" id="5VYP"/>
<dbReference type="SMR" id="C0HK49"/>
<dbReference type="GO" id="GO:0005773">
    <property type="term" value="C:vacuole"/>
    <property type="evidence" value="ECO:0007669"/>
    <property type="project" value="UniProtKB-SubCell"/>
</dbReference>
<dbReference type="GO" id="GO:0070300">
    <property type="term" value="F:phosphatidic acid binding"/>
    <property type="evidence" value="ECO:0000314"/>
    <property type="project" value="UniProtKB"/>
</dbReference>
<dbReference type="GO" id="GO:0006952">
    <property type="term" value="P:defense response"/>
    <property type="evidence" value="ECO:0007669"/>
    <property type="project" value="UniProtKB-KW"/>
</dbReference>
<dbReference type="GO" id="GO:0031640">
    <property type="term" value="P:killing of cells of another organism"/>
    <property type="evidence" value="ECO:0007669"/>
    <property type="project" value="UniProtKB-KW"/>
</dbReference>
<dbReference type="CDD" id="cd00107">
    <property type="entry name" value="Knot1"/>
    <property type="match status" value="1"/>
</dbReference>
<dbReference type="FunFam" id="3.30.30.10:FF:000018">
    <property type="entry name" value="Defensin NsD7"/>
    <property type="match status" value="1"/>
</dbReference>
<dbReference type="Gene3D" id="3.30.30.10">
    <property type="entry name" value="Knottin, scorpion toxin-like"/>
    <property type="match status" value="1"/>
</dbReference>
<dbReference type="InterPro" id="IPR008176">
    <property type="entry name" value="Defensin_plant"/>
</dbReference>
<dbReference type="InterPro" id="IPR003614">
    <property type="entry name" value="Scorpion_toxin-like"/>
</dbReference>
<dbReference type="InterPro" id="IPR036574">
    <property type="entry name" value="Scorpion_toxin-like_sf"/>
</dbReference>
<dbReference type="Pfam" id="PF00304">
    <property type="entry name" value="Gamma-thionin"/>
    <property type="match status" value="1"/>
</dbReference>
<dbReference type="PRINTS" id="PR00288">
    <property type="entry name" value="PUROTHIONIN"/>
</dbReference>
<dbReference type="SMART" id="SM00505">
    <property type="entry name" value="Knot1"/>
    <property type="match status" value="1"/>
</dbReference>
<dbReference type="SUPFAM" id="SSF57095">
    <property type="entry name" value="Scorpion toxin-like"/>
    <property type="match status" value="1"/>
</dbReference>
<dbReference type="PROSITE" id="PS00940">
    <property type="entry name" value="GAMMA_THIONIN"/>
    <property type="match status" value="1"/>
</dbReference>
<protein>
    <recommendedName>
        <fullName evidence="3">Defensin NsD7</fullName>
    </recommendedName>
</protein>
<feature type="chain" id="PRO_0000438709" description="Defensin NsD7">
    <location>
        <begin position="1"/>
        <end position="47"/>
    </location>
</feature>
<feature type="binding site" evidence="2">
    <location>
        <position position="4"/>
    </location>
    <ligand>
        <name>a 1,2-diacyl-sn-glycero-3-phosphate</name>
        <dbReference type="ChEBI" id="CHEBI:58608"/>
        <label>2</label>
    </ligand>
</feature>
<feature type="binding site" evidence="2">
    <location>
        <position position="33"/>
    </location>
    <ligand>
        <name>a 1,2-diacyl-sn-glycero-3-phosphate</name>
        <dbReference type="ChEBI" id="CHEBI:58608"/>
        <label>2</label>
    </ligand>
</feature>
<feature type="binding site" evidence="2">
    <location>
        <position position="36"/>
    </location>
    <ligand>
        <name>a 1,2-diacyl-sn-glycero-3-phosphate</name>
        <dbReference type="ChEBI" id="CHEBI:58608"/>
        <label>1</label>
        <note>ligand shared between two adjacent subunits</note>
    </ligand>
</feature>
<feature type="binding site" evidence="2">
    <location>
        <position position="39"/>
    </location>
    <ligand>
        <name>a 1,2-diacyl-sn-glycero-3-phosphate</name>
        <dbReference type="ChEBI" id="CHEBI:58608"/>
        <label>1</label>
        <note>ligand shared between two adjacent subunits</note>
    </ligand>
</feature>
<feature type="site" description="Required for formation of double helix" evidence="2">
    <location>
        <position position="15"/>
    </location>
</feature>
<feature type="site" description="Required for formation of double helix" evidence="2">
    <location>
        <position position="37"/>
    </location>
</feature>
<feature type="disulfide bond" evidence="2">
    <location>
        <begin position="3"/>
        <end position="47"/>
    </location>
</feature>
<feature type="disulfide bond" evidence="2">
    <location>
        <begin position="14"/>
        <end position="34"/>
    </location>
</feature>
<feature type="disulfide bond" evidence="2">
    <location>
        <begin position="20"/>
        <end position="41"/>
    </location>
</feature>
<feature type="disulfide bond" evidence="2">
    <location>
        <begin position="24"/>
        <end position="43"/>
    </location>
</feature>
<feature type="mutagenesis site" description="Unperturbed ability for fibril formation and membrane disrupting activity." evidence="2">
    <original>K</original>
    <variation>E</variation>
    <location>
        <position position="4"/>
    </location>
</feature>
<feature type="mutagenesis site" description="Complete loss of fibril formation and of membrane disrupting activity." evidence="2">
    <original>I</original>
    <variation>D</variation>
    <location>
        <position position="15"/>
    </location>
</feature>
<feature type="mutagenesis site" description="Retains double helix formation and membrane disrupting activity, although no fibrils are formed." evidence="2">
    <original>R</original>
    <variation>A</variation>
    <location>
        <position position="26"/>
    </location>
</feature>
<feature type="mutagenesis site" description="Complete loss of fibril formation, although some higher-order oligomers are still formed, and of membrane disrupting activity." evidence="2">
    <original>K</original>
    <variation>E</variation>
    <location>
        <position position="36"/>
    </location>
</feature>
<feature type="mutagenesis site" description="Loss of fibril formation, although some higher-order oligomers are still formed, and of membrane disrupting activity." evidence="2">
    <original>I</original>
    <variation>D</variation>
    <location>
        <position position="37"/>
    </location>
</feature>
<feature type="mutagenesis site" description="Complete loss of oligomerization, fibril formation and of membrane disrupting activity." evidence="2">
    <original>R</original>
    <variation>E</variation>
    <location>
        <position position="39"/>
    </location>
</feature>
<feature type="strand" evidence="5">
    <location>
        <begin position="3"/>
        <end position="6"/>
    </location>
</feature>
<feature type="helix" evidence="5">
    <location>
        <begin position="17"/>
        <end position="26"/>
    </location>
</feature>
<feature type="strand" evidence="5">
    <location>
        <begin position="30"/>
        <end position="34"/>
    </location>
</feature>
<feature type="turn" evidence="5">
    <location>
        <begin position="36"/>
        <end position="38"/>
    </location>
</feature>
<feature type="strand" evidence="5">
    <location>
        <begin position="41"/>
        <end position="45"/>
    </location>
</feature>
<evidence type="ECO:0000250" key="1">
    <source>
        <dbReference type="UniProtKB" id="Q8GTM0"/>
    </source>
</evidence>
<evidence type="ECO:0000269" key="2">
    <source>
    </source>
</evidence>
<evidence type="ECO:0000303" key="3">
    <source>
    </source>
</evidence>
<evidence type="ECO:0000305" key="4"/>
<evidence type="ECO:0007829" key="5">
    <source>
        <dbReference type="PDB" id="5KK4"/>
    </source>
</evidence>
<organism>
    <name type="scientific">Nicotiana suaveolens</name>
    <name type="common">Australian tobacco</name>
    <dbReference type="NCBI Taxonomy" id="200320"/>
    <lineage>
        <taxon>Eukaryota</taxon>
        <taxon>Viridiplantae</taxon>
        <taxon>Streptophyta</taxon>
        <taxon>Embryophyta</taxon>
        <taxon>Tracheophyta</taxon>
        <taxon>Spermatophyta</taxon>
        <taxon>Magnoliopsida</taxon>
        <taxon>eudicotyledons</taxon>
        <taxon>Gunneridae</taxon>
        <taxon>Pentapetalae</taxon>
        <taxon>asterids</taxon>
        <taxon>lamiids</taxon>
        <taxon>Solanales</taxon>
        <taxon>Solanaceae</taxon>
        <taxon>Nicotianoideae</taxon>
        <taxon>Nicotianeae</taxon>
        <taxon>Nicotiana</taxon>
    </lineage>
</organism>
<comment type="function">
    <text evidence="2 3">Plant defense peptide (Probable). Disrupts membranes containing phosphatidic acid (PA) via a PA-dependent oligomerization process.</text>
</comment>
<comment type="subunit">
    <text evidence="2">In the presence of phosphatidic acid (PA), forms right-handed double helices which tend to bundle into fibrils. Each helix is a repetition of dimers containing 2 bound molecules of PA per dimer. Dimers are arranged orthogonally in a tip-to-tip configuration with 1 molecule of PA located at the dimer contact interface. Association of 2 helices to form a double helix depends on intercalating isoleucine residues Ile-15 and Ile-37. Bundling of double helices into fibrils depends on Arg-26.</text>
</comment>
<comment type="subcellular location">
    <subcellularLocation>
        <location evidence="1">Vacuole</location>
    </subcellularLocation>
</comment>
<comment type="similarity">
    <text evidence="4">Belongs to the DEFL family.</text>
</comment>
<proteinExistence type="evidence at protein level"/>
<name>DEF_NICSU</name>
<sequence length="47" mass="5386">KDCKRESNTFPGICITKPPCRKACIREKFTDGHCSKILRRCLCTKPC</sequence>
<accession>C0HK49</accession>